<evidence type="ECO:0000255" key="1">
    <source>
        <dbReference type="HAMAP-Rule" id="MF_00528"/>
    </source>
</evidence>
<keyword id="KW-0963">Cytoplasm</keyword>
<keyword id="KW-0378">Hydrolase</keyword>
<keyword id="KW-0546">Nucleotide metabolism</keyword>
<keyword id="KW-1185">Reference proteome</keyword>
<protein>
    <recommendedName>
        <fullName evidence="1">7-methyl-GTP pyrophosphatase</fullName>
        <shortName evidence="1">m(7)GTP pyrophosphatase</shortName>
        <ecNumber evidence="1">3.6.1.-</ecNumber>
    </recommendedName>
</protein>
<sequence length="193" mass="21568">MQSKLILASTSPFRKEILSKIQLDFDAISPVCDETPLKNESPINLVTRLAETKANSCGIEDPNYLIIGSDQVCVINEKIVGKPLTREKAVQQLEEASGHKITFYTGLSVFNTTTKQADTICEEFNVYFRQLTRKQIENYVDKEEPFYCAGSFKCEGLGIALFEKLEGKDPNTLIGLPLISLIDMLEKQGLNVL</sequence>
<reference key="1">
    <citation type="journal article" date="2005" name="Proc. Natl. Acad. Sci. U.S.A.">
        <title>Complete genome sequence of Vibrio fischeri: a symbiotic bacterium with pathogenic congeners.</title>
        <authorList>
            <person name="Ruby E.G."/>
            <person name="Urbanowski M."/>
            <person name="Campbell J."/>
            <person name="Dunn A."/>
            <person name="Faini M."/>
            <person name="Gunsalus R."/>
            <person name="Lostroh P."/>
            <person name="Lupp C."/>
            <person name="McCann J."/>
            <person name="Millikan D."/>
            <person name="Schaefer A."/>
            <person name="Stabb E."/>
            <person name="Stevens A."/>
            <person name="Visick K."/>
            <person name="Whistler C."/>
            <person name="Greenberg E.P."/>
        </authorList>
    </citation>
    <scope>NUCLEOTIDE SEQUENCE [LARGE SCALE GENOMIC DNA]</scope>
    <source>
        <strain>ATCC 700601 / ES114</strain>
    </source>
</reference>
<organism>
    <name type="scientific">Aliivibrio fischeri (strain ATCC 700601 / ES114)</name>
    <name type="common">Vibrio fischeri</name>
    <dbReference type="NCBI Taxonomy" id="312309"/>
    <lineage>
        <taxon>Bacteria</taxon>
        <taxon>Pseudomonadati</taxon>
        <taxon>Pseudomonadota</taxon>
        <taxon>Gammaproteobacteria</taxon>
        <taxon>Vibrionales</taxon>
        <taxon>Vibrionaceae</taxon>
        <taxon>Aliivibrio</taxon>
    </lineage>
</organism>
<accession>Q5E405</accession>
<dbReference type="EC" id="3.6.1.-" evidence="1"/>
<dbReference type="EMBL" id="CP000020">
    <property type="protein sequence ID" value="AAW86241.1"/>
    <property type="molecule type" value="Genomic_DNA"/>
</dbReference>
<dbReference type="RefSeq" id="WP_011262290.1">
    <property type="nucleotide sequence ID" value="NC_006840.2"/>
</dbReference>
<dbReference type="RefSeq" id="YP_205129.1">
    <property type="nucleotide sequence ID" value="NC_006840.2"/>
</dbReference>
<dbReference type="SMR" id="Q5E405"/>
<dbReference type="STRING" id="312309.VF_1746"/>
<dbReference type="EnsemblBacteria" id="AAW86241">
    <property type="protein sequence ID" value="AAW86241"/>
    <property type="gene ID" value="VF_1746"/>
</dbReference>
<dbReference type="GeneID" id="54164445"/>
<dbReference type="KEGG" id="vfi:VF_1746"/>
<dbReference type="PATRIC" id="fig|312309.11.peg.1772"/>
<dbReference type="eggNOG" id="COG0424">
    <property type="taxonomic scope" value="Bacteria"/>
</dbReference>
<dbReference type="HOGENOM" id="CLU_040416_1_0_6"/>
<dbReference type="OrthoDB" id="9813694at2"/>
<dbReference type="Proteomes" id="UP000000537">
    <property type="component" value="Chromosome I"/>
</dbReference>
<dbReference type="GO" id="GO:0005737">
    <property type="term" value="C:cytoplasm"/>
    <property type="evidence" value="ECO:0007669"/>
    <property type="project" value="UniProtKB-SubCell"/>
</dbReference>
<dbReference type="GO" id="GO:0047429">
    <property type="term" value="F:nucleoside triphosphate diphosphatase activity"/>
    <property type="evidence" value="ECO:0007669"/>
    <property type="project" value="InterPro"/>
</dbReference>
<dbReference type="GO" id="GO:0009117">
    <property type="term" value="P:nucleotide metabolic process"/>
    <property type="evidence" value="ECO:0007669"/>
    <property type="project" value="UniProtKB-KW"/>
</dbReference>
<dbReference type="CDD" id="cd00555">
    <property type="entry name" value="Maf"/>
    <property type="match status" value="1"/>
</dbReference>
<dbReference type="FunFam" id="3.90.950.10:FF:000005">
    <property type="entry name" value="7-methyl-GTP pyrophosphatase"/>
    <property type="match status" value="1"/>
</dbReference>
<dbReference type="Gene3D" id="3.90.950.10">
    <property type="match status" value="1"/>
</dbReference>
<dbReference type="HAMAP" id="MF_00528">
    <property type="entry name" value="Maf"/>
    <property type="match status" value="1"/>
</dbReference>
<dbReference type="InterPro" id="IPR029001">
    <property type="entry name" value="ITPase-like_fam"/>
</dbReference>
<dbReference type="InterPro" id="IPR003697">
    <property type="entry name" value="Maf-like"/>
</dbReference>
<dbReference type="NCBIfam" id="TIGR00172">
    <property type="entry name" value="maf"/>
    <property type="match status" value="1"/>
</dbReference>
<dbReference type="PANTHER" id="PTHR43213:SF10">
    <property type="entry name" value="7-METHYL-GTP PYROPHOSPHATASE"/>
    <property type="match status" value="1"/>
</dbReference>
<dbReference type="PANTHER" id="PTHR43213">
    <property type="entry name" value="BIFUNCTIONAL DTTP/UTP PYROPHOSPHATASE/METHYLTRANSFERASE PROTEIN-RELATED"/>
    <property type="match status" value="1"/>
</dbReference>
<dbReference type="Pfam" id="PF02545">
    <property type="entry name" value="Maf"/>
    <property type="match status" value="1"/>
</dbReference>
<dbReference type="PIRSF" id="PIRSF006305">
    <property type="entry name" value="Maf"/>
    <property type="match status" value="1"/>
</dbReference>
<dbReference type="SUPFAM" id="SSF52972">
    <property type="entry name" value="ITPase-like"/>
    <property type="match status" value="1"/>
</dbReference>
<proteinExistence type="inferred from homology"/>
<gene>
    <name type="ordered locus">VF_1746</name>
</gene>
<name>NTPPB_ALIF1</name>
<feature type="chain" id="PRO_0000267462" description="7-methyl-GTP pyrophosphatase">
    <location>
        <begin position="1"/>
        <end position="193"/>
    </location>
</feature>
<feature type="active site" description="Proton acceptor" evidence="1">
    <location>
        <position position="70"/>
    </location>
</feature>
<feature type="site" description="Important for substrate specificity" evidence="1">
    <location>
        <position position="13"/>
    </location>
</feature>
<feature type="site" description="Important for substrate specificity" evidence="1">
    <location>
        <position position="71"/>
    </location>
</feature>
<feature type="site" description="Important for substrate specificity" evidence="1">
    <location>
        <position position="155"/>
    </location>
</feature>
<comment type="function">
    <text evidence="1">Nucleoside triphosphate pyrophosphatase that hydrolyzes 7-methyl-GTP (m(7)GTP). May have a dual role in cell division arrest and in preventing the incorporation of modified nucleotides into cellular nucleic acids.</text>
</comment>
<comment type="catalytic activity">
    <reaction evidence="1">
        <text>N(7)-methyl-GTP + H2O = N(7)-methyl-GMP + diphosphate + H(+)</text>
        <dbReference type="Rhea" id="RHEA:58744"/>
        <dbReference type="ChEBI" id="CHEBI:15377"/>
        <dbReference type="ChEBI" id="CHEBI:15378"/>
        <dbReference type="ChEBI" id="CHEBI:33019"/>
        <dbReference type="ChEBI" id="CHEBI:58285"/>
        <dbReference type="ChEBI" id="CHEBI:87133"/>
    </reaction>
</comment>
<comment type="cofactor">
    <cofactor evidence="1">
        <name>a divalent metal cation</name>
        <dbReference type="ChEBI" id="CHEBI:60240"/>
    </cofactor>
</comment>
<comment type="subcellular location">
    <subcellularLocation>
        <location evidence="1">Cytoplasm</location>
    </subcellularLocation>
</comment>
<comment type="similarity">
    <text evidence="1">Belongs to the Maf family. YceF subfamily.</text>
</comment>